<evidence type="ECO:0000250" key="1"/>
<evidence type="ECO:0000255" key="2">
    <source>
        <dbReference type="PROSITE-ProRule" id="PRU00108"/>
    </source>
</evidence>
<evidence type="ECO:0000255" key="3">
    <source>
        <dbReference type="PROSITE-ProRule" id="PRU00530"/>
    </source>
</evidence>
<evidence type="ECO:0000256" key="4">
    <source>
        <dbReference type="SAM" id="MobiDB-lite"/>
    </source>
</evidence>
<evidence type="ECO:0000305" key="5"/>
<gene>
    <name type="primary">POU2F1</name>
    <name type="synonym">OCT1</name>
    <name type="synonym">OTF1</name>
</gene>
<sequence length="739" mass="75982">MNNPSETSKPSMESGDGNTGTQTNGLDFQKQPVPVGGPISTAQAQAFLGHLHQVQLAGTSLQAAAQSLNVQSKSNEESGDSQQPSQPSQQPSVQAAIPQTQLMLAGGQITGLTLTPAQQQLLLQQAQAQLLAAAVQHSASQQHSAAGATISASAATPMTQIPLSQPIQIAQHLQQLQQQNLNLQQFVLVHPTTNLQPAQFIISQTPQGQQGLLQAQNLLTQLPQQSQANLLQSQPSITLASQPATPTRTIAATPIQPLPQSQSTPKRIDTPSLEEPSDLEELEQFAKTFKQRRIKLGFTQGDVGLAMGKLYGNDFSQTTISRFEALNLSFKNMCKLKPLLEKWLNDAENLSSDSTLSSPSALNSPGQGIEGVNRRRKKRTSIETNIRVALEKSFLENQKPTSEEITMIADQLNMEKEVIRVWFCNRRQKEKRINPPSSGGTSSSPIKAIFPSPTSLVATTPSLVTSSAATTLTVNPVLPLTSPAVTSLSVTGTTETTSNNTATVISTAPPASSAVTSPSLSPSPSASASISEASSASETSTTQTTSTPLSSPLGTSQVMVTASGLQTAAAAALQGAAQLPANASLAAMAAAAGLNPGLMASSQFAAGGALLSLNPGTLGGALSPALMSNSTLATIQALASSGSLPITSLDASGNLVFANAGGTPNIVTAPLFLNPQNLSLLTSNPVSLVSAAAASAGASGPVASLHATSTSAESIQNSLLTVASASGATSTTTTASKAQ</sequence>
<protein>
    <recommendedName>
        <fullName>POU domain, class 2, transcription factor 1</fullName>
    </recommendedName>
    <alternativeName>
        <fullName>NF-A1</fullName>
    </alternativeName>
    <alternativeName>
        <fullName>Octamer-binding protein 1</fullName>
        <shortName>Oct-1</shortName>
    </alternativeName>
    <alternativeName>
        <fullName>Octamer-binding transcription factor 1</fullName>
        <shortName>OTF-1</shortName>
    </alternativeName>
</protein>
<feature type="chain" id="PRO_0000100712" description="POU domain, class 2, transcription factor 1">
    <location>
        <begin position="1"/>
        <end position="739"/>
    </location>
</feature>
<feature type="domain" description="POU-specific" evidence="3">
    <location>
        <begin position="274"/>
        <end position="348"/>
    </location>
</feature>
<feature type="DNA-binding region" description="Homeobox" evidence="2">
    <location>
        <begin position="375"/>
        <end position="434"/>
    </location>
</feature>
<feature type="region of interest" description="Disordered" evidence="4">
    <location>
        <begin position="1"/>
        <end position="39"/>
    </location>
</feature>
<feature type="region of interest" description="Disordered" evidence="4">
    <location>
        <begin position="67"/>
        <end position="95"/>
    </location>
</feature>
<feature type="region of interest" description="Disordered" evidence="4">
    <location>
        <begin position="253"/>
        <end position="277"/>
    </location>
</feature>
<feature type="region of interest" description="Disordered" evidence="4">
    <location>
        <begin position="353"/>
        <end position="378"/>
    </location>
</feature>
<feature type="region of interest" description="Disordered" evidence="4">
    <location>
        <begin position="489"/>
        <end position="553"/>
    </location>
</feature>
<feature type="compositionally biased region" description="Polar residues" evidence="4">
    <location>
        <begin position="1"/>
        <end position="11"/>
    </location>
</feature>
<feature type="compositionally biased region" description="Low complexity" evidence="4">
    <location>
        <begin position="81"/>
        <end position="95"/>
    </location>
</feature>
<feature type="compositionally biased region" description="Low complexity" evidence="4">
    <location>
        <begin position="353"/>
        <end position="364"/>
    </location>
</feature>
<feature type="compositionally biased region" description="Low complexity" evidence="4">
    <location>
        <begin position="489"/>
        <end position="552"/>
    </location>
</feature>
<organism>
    <name type="scientific">Gallus gallus</name>
    <name type="common">Chicken</name>
    <dbReference type="NCBI Taxonomy" id="9031"/>
    <lineage>
        <taxon>Eukaryota</taxon>
        <taxon>Metazoa</taxon>
        <taxon>Chordata</taxon>
        <taxon>Craniata</taxon>
        <taxon>Vertebrata</taxon>
        <taxon>Euteleostomi</taxon>
        <taxon>Archelosauria</taxon>
        <taxon>Archosauria</taxon>
        <taxon>Dinosauria</taxon>
        <taxon>Saurischia</taxon>
        <taxon>Theropoda</taxon>
        <taxon>Coelurosauria</taxon>
        <taxon>Aves</taxon>
        <taxon>Neognathae</taxon>
        <taxon>Galloanserae</taxon>
        <taxon>Galliformes</taxon>
        <taxon>Phasianidae</taxon>
        <taxon>Phasianinae</taxon>
        <taxon>Gallus</taxon>
    </lineage>
</organism>
<reference key="1">
    <citation type="journal article" date="1990" name="Proc. Natl. Acad. Sci. U.S.A.">
        <title>Characterization of chicken octamer-binding proteins demonstrates that POU domain-containing homeobox transcription factors have been highly conserved during vertebrate evolution.</title>
        <authorList>
            <person name="Petryniak B."/>
            <person name="Staudt L.M."/>
            <person name="Postema C.E."/>
            <person name="McCormack W.T."/>
            <person name="Thompson C.B."/>
        </authorList>
    </citation>
    <scope>NUCLEOTIDE SEQUENCE [MRNA]</scope>
</reference>
<name>PO2F1_CHICK</name>
<comment type="function">
    <text evidence="1">Transcription factor that binds to the octamer motif (5'-ATTTGCAT-3') and activates the promoters of the genes for some small nuclear RNAs (snRNA) and of genes such as those for histone H2B and immunoglobulins. Modulates transcription transactivation by NR3C1, AR and PGR (By similarity).</text>
</comment>
<comment type="subunit">
    <text evidence="1">Interacts with NR3C1, AR and PGR.</text>
</comment>
<comment type="subcellular location">
    <subcellularLocation>
        <location>Nucleus</location>
    </subcellularLocation>
</comment>
<comment type="similarity">
    <text evidence="5">Belongs to the POU transcription factor family. Class-2 subfamily.</text>
</comment>
<accession>P15143</accession>
<proteinExistence type="evidence at transcript level"/>
<keyword id="KW-0010">Activator</keyword>
<keyword id="KW-0238">DNA-binding</keyword>
<keyword id="KW-0371">Homeobox</keyword>
<keyword id="KW-0539">Nucleus</keyword>
<keyword id="KW-1185">Reference proteome</keyword>
<keyword id="KW-0804">Transcription</keyword>
<keyword id="KW-0805">Transcription regulation</keyword>
<dbReference type="EMBL" id="M29972">
    <property type="protein sequence ID" value="AAA48993.1"/>
    <property type="molecule type" value="mRNA"/>
</dbReference>
<dbReference type="PIR" id="A34873">
    <property type="entry name" value="A34873"/>
</dbReference>
<dbReference type="RefSeq" id="NP_990803.1">
    <property type="nucleotide sequence ID" value="NM_205472.1"/>
</dbReference>
<dbReference type="SMR" id="P15143"/>
<dbReference type="FunCoup" id="P15143">
    <property type="interactions" value="1178"/>
</dbReference>
<dbReference type="STRING" id="9031.ENSGALP00000029768"/>
<dbReference type="PaxDb" id="9031-ENSGALP00000029768"/>
<dbReference type="GeneID" id="396463"/>
<dbReference type="KEGG" id="gga:396463"/>
<dbReference type="CTD" id="5451"/>
<dbReference type="VEuPathDB" id="HostDB:geneid_396463"/>
<dbReference type="eggNOG" id="KOG3802">
    <property type="taxonomic scope" value="Eukaryota"/>
</dbReference>
<dbReference type="InParanoid" id="P15143"/>
<dbReference type="OrthoDB" id="6358449at2759"/>
<dbReference type="PhylomeDB" id="P15143"/>
<dbReference type="PRO" id="PR:P15143"/>
<dbReference type="Proteomes" id="UP000000539">
    <property type="component" value="Unassembled WGS sequence"/>
</dbReference>
<dbReference type="GO" id="GO:0005634">
    <property type="term" value="C:nucleus"/>
    <property type="evidence" value="ECO:0007669"/>
    <property type="project" value="UniProtKB-SubCell"/>
</dbReference>
<dbReference type="GO" id="GO:0000981">
    <property type="term" value="F:DNA-binding transcription factor activity, RNA polymerase II-specific"/>
    <property type="evidence" value="ECO:0000318"/>
    <property type="project" value="GO_Central"/>
</dbReference>
<dbReference type="GO" id="GO:0000978">
    <property type="term" value="F:RNA polymerase II cis-regulatory region sequence-specific DNA binding"/>
    <property type="evidence" value="ECO:0000318"/>
    <property type="project" value="GO_Central"/>
</dbReference>
<dbReference type="GO" id="GO:0001223">
    <property type="term" value="F:transcription coactivator binding"/>
    <property type="evidence" value="ECO:0000353"/>
    <property type="project" value="AgBase"/>
</dbReference>
<dbReference type="GO" id="GO:0006357">
    <property type="term" value="P:regulation of transcription by RNA polymerase II"/>
    <property type="evidence" value="ECO:0000318"/>
    <property type="project" value="GO_Central"/>
</dbReference>
<dbReference type="CDD" id="cd00086">
    <property type="entry name" value="homeodomain"/>
    <property type="match status" value="1"/>
</dbReference>
<dbReference type="FunFam" id="1.10.10.60:FF:000005">
    <property type="entry name" value="POU domain protein"/>
    <property type="match status" value="1"/>
</dbReference>
<dbReference type="FunFam" id="1.10.260.40:FF:000001">
    <property type="entry name" value="POU domain protein"/>
    <property type="match status" value="1"/>
</dbReference>
<dbReference type="Gene3D" id="1.10.10.60">
    <property type="entry name" value="Homeodomain-like"/>
    <property type="match status" value="1"/>
</dbReference>
<dbReference type="Gene3D" id="1.10.260.40">
    <property type="entry name" value="lambda repressor-like DNA-binding domains"/>
    <property type="match status" value="1"/>
</dbReference>
<dbReference type="InterPro" id="IPR001356">
    <property type="entry name" value="HD"/>
</dbReference>
<dbReference type="InterPro" id="IPR017970">
    <property type="entry name" value="Homeobox_CS"/>
</dbReference>
<dbReference type="InterPro" id="IPR009057">
    <property type="entry name" value="Homeodomain-like_sf"/>
</dbReference>
<dbReference type="InterPro" id="IPR010982">
    <property type="entry name" value="Lambda_DNA-bd_dom_sf"/>
</dbReference>
<dbReference type="InterPro" id="IPR013847">
    <property type="entry name" value="POU"/>
</dbReference>
<dbReference type="InterPro" id="IPR045703">
    <property type="entry name" value="POU2F1_C"/>
</dbReference>
<dbReference type="InterPro" id="IPR000327">
    <property type="entry name" value="POU_dom"/>
</dbReference>
<dbReference type="InterPro" id="IPR050255">
    <property type="entry name" value="POU_domain_TF"/>
</dbReference>
<dbReference type="InterPro" id="IPR000972">
    <property type="entry name" value="TF_octamer"/>
</dbReference>
<dbReference type="PANTHER" id="PTHR11636">
    <property type="entry name" value="POU DOMAIN"/>
    <property type="match status" value="1"/>
</dbReference>
<dbReference type="PANTHER" id="PTHR11636:SF47">
    <property type="entry name" value="POU DOMAIN, CLASS 2, TRANSCRIPTION FACTOR 1"/>
    <property type="match status" value="1"/>
</dbReference>
<dbReference type="Pfam" id="PF00046">
    <property type="entry name" value="Homeodomain"/>
    <property type="match status" value="1"/>
</dbReference>
<dbReference type="Pfam" id="PF00157">
    <property type="entry name" value="Pou"/>
    <property type="match status" value="1"/>
</dbReference>
<dbReference type="Pfam" id="PF19536">
    <property type="entry name" value="POU2F1_C"/>
    <property type="match status" value="1"/>
</dbReference>
<dbReference type="PRINTS" id="PR00029">
    <property type="entry name" value="OCTAMER"/>
</dbReference>
<dbReference type="PRINTS" id="PR00028">
    <property type="entry name" value="POUDOMAIN"/>
</dbReference>
<dbReference type="SMART" id="SM00389">
    <property type="entry name" value="HOX"/>
    <property type="match status" value="1"/>
</dbReference>
<dbReference type="SMART" id="SM00352">
    <property type="entry name" value="POU"/>
    <property type="match status" value="1"/>
</dbReference>
<dbReference type="SUPFAM" id="SSF46689">
    <property type="entry name" value="Homeodomain-like"/>
    <property type="match status" value="1"/>
</dbReference>
<dbReference type="SUPFAM" id="SSF47413">
    <property type="entry name" value="lambda repressor-like DNA-binding domains"/>
    <property type="match status" value="1"/>
</dbReference>
<dbReference type="PROSITE" id="PS00027">
    <property type="entry name" value="HOMEOBOX_1"/>
    <property type="match status" value="1"/>
</dbReference>
<dbReference type="PROSITE" id="PS50071">
    <property type="entry name" value="HOMEOBOX_2"/>
    <property type="match status" value="1"/>
</dbReference>
<dbReference type="PROSITE" id="PS00035">
    <property type="entry name" value="POU_1"/>
    <property type="match status" value="1"/>
</dbReference>
<dbReference type="PROSITE" id="PS00465">
    <property type="entry name" value="POU_2"/>
    <property type="match status" value="1"/>
</dbReference>
<dbReference type="PROSITE" id="PS51179">
    <property type="entry name" value="POU_3"/>
    <property type="match status" value="1"/>
</dbReference>